<comment type="function">
    <text evidence="1">Catalyzes the phosphorylation of diacylglycerol (DAG) into phosphatidic acid. Is a key enzyme involved in the production of lipoteichoic acid by reintroducing DAG formed from the breakdown of membrane phospholipids into the phosphatidylglycerol biosynthetic pathway.</text>
</comment>
<comment type="catalytic activity">
    <reaction evidence="1">
        <text>a 1,2-diacyl-sn-glycerol + ATP = a 1,2-diacyl-sn-glycero-3-phosphate + ADP + H(+)</text>
        <dbReference type="Rhea" id="RHEA:10272"/>
        <dbReference type="ChEBI" id="CHEBI:15378"/>
        <dbReference type="ChEBI" id="CHEBI:17815"/>
        <dbReference type="ChEBI" id="CHEBI:30616"/>
        <dbReference type="ChEBI" id="CHEBI:58608"/>
        <dbReference type="ChEBI" id="CHEBI:456216"/>
        <dbReference type="EC" id="2.7.1.107"/>
    </reaction>
</comment>
<comment type="cofactor">
    <cofactor evidence="1">
        <name>Mg(2+)</name>
        <dbReference type="ChEBI" id="CHEBI:18420"/>
    </cofactor>
    <text evidence="1">Binds 1 Mg(2+) ion per subunit. This ion appears to have a structural role and is required for catalytic activity.</text>
</comment>
<comment type="subunit">
    <text evidence="1">Homodimer.</text>
</comment>
<comment type="similarity">
    <text evidence="3">Belongs to the diacylglycerol/lipid kinase family.</text>
</comment>
<gene>
    <name type="primary">dagK</name>
    <name type="ordered locus">SAHV_1883</name>
</gene>
<name>DAGK_STAA1</name>
<proteinExistence type="inferred from homology"/>
<protein>
    <recommendedName>
        <fullName>Diacylglycerol kinase</fullName>
        <shortName>DAG kinase</shortName>
        <shortName>DAGK</shortName>
        <ecNumber evidence="1">2.7.1.107</ecNumber>
    </recommendedName>
</protein>
<accession>A7X424</accession>
<dbReference type="EC" id="2.7.1.107" evidence="1"/>
<dbReference type="EMBL" id="AP009324">
    <property type="protein sequence ID" value="BAF78766.1"/>
    <property type="molecule type" value="Genomic_DNA"/>
</dbReference>
<dbReference type="RefSeq" id="WP_001231451.1">
    <property type="nucleotide sequence ID" value="NZ_CTYB01000043.1"/>
</dbReference>
<dbReference type="SMR" id="A7X424"/>
<dbReference type="KEGG" id="saw:SAHV_1883"/>
<dbReference type="HOGENOM" id="CLU_045532_1_0_9"/>
<dbReference type="GO" id="GO:0005886">
    <property type="term" value="C:plasma membrane"/>
    <property type="evidence" value="ECO:0007669"/>
    <property type="project" value="TreeGrafter"/>
</dbReference>
<dbReference type="GO" id="GO:0005524">
    <property type="term" value="F:ATP binding"/>
    <property type="evidence" value="ECO:0007669"/>
    <property type="project" value="UniProtKB-KW"/>
</dbReference>
<dbReference type="GO" id="GO:0004143">
    <property type="term" value="F:ATP-dependent diacylglycerol kinase activity"/>
    <property type="evidence" value="ECO:0007669"/>
    <property type="project" value="UniProtKB-EC"/>
</dbReference>
<dbReference type="GO" id="GO:0046872">
    <property type="term" value="F:metal ion binding"/>
    <property type="evidence" value="ECO:0007669"/>
    <property type="project" value="UniProtKB-KW"/>
</dbReference>
<dbReference type="GO" id="GO:0008654">
    <property type="term" value="P:phospholipid biosynthetic process"/>
    <property type="evidence" value="ECO:0007669"/>
    <property type="project" value="UniProtKB-KW"/>
</dbReference>
<dbReference type="FunFam" id="2.60.200.40:FF:000015">
    <property type="entry name" value="Diacylglycerol kinase"/>
    <property type="match status" value="1"/>
</dbReference>
<dbReference type="FunFam" id="3.40.50.10330:FF:000008">
    <property type="entry name" value="Probable lipid kinase YegS"/>
    <property type="match status" value="1"/>
</dbReference>
<dbReference type="Gene3D" id="2.60.200.40">
    <property type="match status" value="1"/>
</dbReference>
<dbReference type="Gene3D" id="3.40.50.10330">
    <property type="entry name" value="Probable inorganic polyphosphate/atp-NAD kinase, domain 1"/>
    <property type="match status" value="1"/>
</dbReference>
<dbReference type="InterPro" id="IPR017438">
    <property type="entry name" value="ATP-NAD_kinase_N"/>
</dbReference>
<dbReference type="InterPro" id="IPR005218">
    <property type="entry name" value="Diacylglycerol/lipid_kinase"/>
</dbReference>
<dbReference type="InterPro" id="IPR001206">
    <property type="entry name" value="Diacylglycerol_kinase_cat_dom"/>
</dbReference>
<dbReference type="InterPro" id="IPR050187">
    <property type="entry name" value="Lipid_Phosphate_FormReg"/>
</dbReference>
<dbReference type="InterPro" id="IPR016064">
    <property type="entry name" value="NAD/diacylglycerol_kinase_sf"/>
</dbReference>
<dbReference type="InterPro" id="IPR045540">
    <property type="entry name" value="YegS/DAGK_C"/>
</dbReference>
<dbReference type="NCBIfam" id="NF009603">
    <property type="entry name" value="PRK13055.1"/>
    <property type="match status" value="1"/>
</dbReference>
<dbReference type="NCBIfam" id="NF009874">
    <property type="entry name" value="PRK13337.1"/>
    <property type="match status" value="1"/>
</dbReference>
<dbReference type="NCBIfam" id="TIGR00147">
    <property type="entry name" value="YegS/Rv2252/BmrU family lipid kinase"/>
    <property type="match status" value="1"/>
</dbReference>
<dbReference type="PANTHER" id="PTHR12358:SF106">
    <property type="entry name" value="LIPID KINASE YEGS"/>
    <property type="match status" value="1"/>
</dbReference>
<dbReference type="PANTHER" id="PTHR12358">
    <property type="entry name" value="SPHINGOSINE KINASE"/>
    <property type="match status" value="1"/>
</dbReference>
<dbReference type="Pfam" id="PF00781">
    <property type="entry name" value="DAGK_cat"/>
    <property type="match status" value="1"/>
</dbReference>
<dbReference type="Pfam" id="PF19279">
    <property type="entry name" value="YegS_C"/>
    <property type="match status" value="1"/>
</dbReference>
<dbReference type="SMART" id="SM00046">
    <property type="entry name" value="DAGKc"/>
    <property type="match status" value="1"/>
</dbReference>
<dbReference type="SUPFAM" id="SSF111331">
    <property type="entry name" value="NAD kinase/diacylglycerol kinase-like"/>
    <property type="match status" value="1"/>
</dbReference>
<dbReference type="PROSITE" id="PS50146">
    <property type="entry name" value="DAGK"/>
    <property type="match status" value="1"/>
</dbReference>
<reference key="1">
    <citation type="journal article" date="2008" name="Antimicrob. Agents Chemother.">
        <title>Mutated response regulator graR is responsible for phenotypic conversion of Staphylococcus aureus from heterogeneous vancomycin-intermediate resistance to vancomycin-intermediate resistance.</title>
        <authorList>
            <person name="Neoh H.-M."/>
            <person name="Cui L."/>
            <person name="Yuzawa H."/>
            <person name="Takeuchi F."/>
            <person name="Matsuo M."/>
            <person name="Hiramatsu K."/>
        </authorList>
    </citation>
    <scope>NUCLEOTIDE SEQUENCE [LARGE SCALE GENOMIC DNA]</scope>
    <source>
        <strain>Mu3 / ATCC 700698</strain>
    </source>
</reference>
<sequence>MRKRARIIYNPTSGKELFKRELPDALIKLEKAGYETSAYATEKIGDATLEAERAMHENYDVLIAAGGDGTLNEVVNGIAEKPNRPKLGVIPMGTVNDFGRALHIPNDIMGALDVIIEGHSTKVDIGKMNNRYFINLAAGGQLTQVSYETPSKLKSIVGPFAYYIKGFEMLPQMKAVDLRIEYDGNVFQGEALLFFLGLTNSMAGFEKLVPDAKLDDGYFTLIIVEKSNLAELGHIMTLASRGEHTKHPKVIYEKAKAINISSFTDLQLNVDGEYGGKLPANFLNLERHIDVFAPNDIVNEELINNDHVDDNLIEE</sequence>
<organism>
    <name type="scientific">Staphylococcus aureus (strain Mu3 / ATCC 700698)</name>
    <dbReference type="NCBI Taxonomy" id="418127"/>
    <lineage>
        <taxon>Bacteria</taxon>
        <taxon>Bacillati</taxon>
        <taxon>Bacillota</taxon>
        <taxon>Bacilli</taxon>
        <taxon>Bacillales</taxon>
        <taxon>Staphylococcaceae</taxon>
        <taxon>Staphylococcus</taxon>
    </lineage>
</organism>
<feature type="chain" id="PRO_0000386485" description="Diacylglycerol kinase">
    <location>
        <begin position="1"/>
        <end position="315"/>
    </location>
</feature>
<feature type="domain" description="DAGKc" evidence="2">
    <location>
        <begin position="1"/>
        <end position="132"/>
    </location>
</feature>
<feature type="active site" description="Proton acceptor" evidence="1">
    <location>
        <position position="273"/>
    </location>
</feature>
<feature type="binding site" evidence="2">
    <location>
        <begin position="10"/>
        <end position="14"/>
    </location>
    <ligand>
        <name>ATP</name>
        <dbReference type="ChEBI" id="CHEBI:30616"/>
    </ligand>
</feature>
<feature type="binding site" evidence="2">
    <location>
        <position position="41"/>
    </location>
    <ligand>
        <name>ATP</name>
        <dbReference type="ChEBI" id="CHEBI:30616"/>
    </ligand>
</feature>
<feature type="binding site" evidence="2">
    <location>
        <begin position="67"/>
        <end position="73"/>
    </location>
    <ligand>
        <name>ATP</name>
        <dbReference type="ChEBI" id="CHEBI:30616"/>
    </ligand>
</feature>
<feature type="binding site" evidence="2">
    <location>
        <position position="94"/>
    </location>
    <ligand>
        <name>ATP</name>
        <dbReference type="ChEBI" id="CHEBI:30616"/>
    </ligand>
</feature>
<feature type="binding site" evidence="1">
    <location>
        <position position="213"/>
    </location>
    <ligand>
        <name>Mg(2+)</name>
        <dbReference type="ChEBI" id="CHEBI:18420"/>
    </ligand>
</feature>
<feature type="binding site" evidence="1">
    <location>
        <position position="216"/>
    </location>
    <ligand>
        <name>Mg(2+)</name>
        <dbReference type="ChEBI" id="CHEBI:18420"/>
    </ligand>
</feature>
<feature type="binding site" evidence="1">
    <location>
        <position position="218"/>
    </location>
    <ligand>
        <name>Mg(2+)</name>
        <dbReference type="ChEBI" id="CHEBI:18420"/>
    </ligand>
</feature>
<evidence type="ECO:0000250" key="1">
    <source>
        <dbReference type="UniProtKB" id="Q6GFF9"/>
    </source>
</evidence>
<evidence type="ECO:0000255" key="2">
    <source>
        <dbReference type="PROSITE-ProRule" id="PRU00783"/>
    </source>
</evidence>
<evidence type="ECO:0000305" key="3"/>
<keyword id="KW-0067">ATP-binding</keyword>
<keyword id="KW-0418">Kinase</keyword>
<keyword id="KW-0444">Lipid biosynthesis</keyword>
<keyword id="KW-0443">Lipid metabolism</keyword>
<keyword id="KW-0460">Magnesium</keyword>
<keyword id="KW-0479">Metal-binding</keyword>
<keyword id="KW-0547">Nucleotide-binding</keyword>
<keyword id="KW-0594">Phospholipid biosynthesis</keyword>
<keyword id="KW-1208">Phospholipid metabolism</keyword>
<keyword id="KW-0808">Transferase</keyword>